<protein>
    <recommendedName>
        <fullName evidence="1">Glycine--tRNA ligase alpha subunit</fullName>
        <ecNumber evidence="1">6.1.1.14</ecNumber>
    </recommendedName>
    <alternativeName>
        <fullName evidence="1">Glycyl-tRNA synthetase alpha subunit</fullName>
        <shortName evidence="1">GlyRS</shortName>
    </alternativeName>
</protein>
<sequence>MNKFDSKTFQGLILSLQDYWARQGCVIIQPLDMEVGAGTFHPMTFLRSIGPEPISSAYVQPCRRPTDGRYGENPNRLQHYYQFQVMLKPSPSNIQELYLGSLKELGFDPLVHDIRFVEDNWESPTLGAWGLGWEVWLNGMEVTQFTYFQQVGGIECSPVTGEITYGLERLAMYIQGVDSIYDLVWTDGPMGKVTYGDVFHQNEVEQSTYNFEYADVDALFGMFDHCEKESQKMIEAGLPLPAYEQVMKASHAFNLLDARHAISVTERQRYILRVRTLSKACAEAYYQAREKLGFPMCKKEA</sequence>
<organism>
    <name type="scientific">Pseudoalteromonas atlantica (strain T6c / ATCC BAA-1087)</name>
    <dbReference type="NCBI Taxonomy" id="3042615"/>
    <lineage>
        <taxon>Bacteria</taxon>
        <taxon>Pseudomonadati</taxon>
        <taxon>Pseudomonadota</taxon>
        <taxon>Gammaproteobacteria</taxon>
        <taxon>Alteromonadales</taxon>
        <taxon>Alteromonadaceae</taxon>
        <taxon>Paraglaciecola</taxon>
    </lineage>
</organism>
<reference key="1">
    <citation type="submission" date="2006-06" db="EMBL/GenBank/DDBJ databases">
        <title>Complete sequence of Pseudoalteromonas atlantica T6c.</title>
        <authorList>
            <consortium name="US DOE Joint Genome Institute"/>
            <person name="Copeland A."/>
            <person name="Lucas S."/>
            <person name="Lapidus A."/>
            <person name="Barry K."/>
            <person name="Detter J.C."/>
            <person name="Glavina del Rio T."/>
            <person name="Hammon N."/>
            <person name="Israni S."/>
            <person name="Dalin E."/>
            <person name="Tice H."/>
            <person name="Pitluck S."/>
            <person name="Saunders E."/>
            <person name="Brettin T."/>
            <person name="Bruce D."/>
            <person name="Han C."/>
            <person name="Tapia R."/>
            <person name="Gilna P."/>
            <person name="Schmutz J."/>
            <person name="Larimer F."/>
            <person name="Land M."/>
            <person name="Hauser L."/>
            <person name="Kyrpides N."/>
            <person name="Kim E."/>
            <person name="Karls A.C."/>
            <person name="Bartlett D."/>
            <person name="Higgins B.P."/>
            <person name="Richardson P."/>
        </authorList>
    </citation>
    <scope>NUCLEOTIDE SEQUENCE [LARGE SCALE GENOMIC DNA]</scope>
    <source>
        <strain>T6c / ATCC BAA-1087</strain>
    </source>
</reference>
<proteinExistence type="inferred from homology"/>
<evidence type="ECO:0000255" key="1">
    <source>
        <dbReference type="HAMAP-Rule" id="MF_00254"/>
    </source>
</evidence>
<feature type="chain" id="PRO_1000047466" description="Glycine--tRNA ligase alpha subunit">
    <location>
        <begin position="1"/>
        <end position="301"/>
    </location>
</feature>
<keyword id="KW-0030">Aminoacyl-tRNA synthetase</keyword>
<keyword id="KW-0067">ATP-binding</keyword>
<keyword id="KW-0963">Cytoplasm</keyword>
<keyword id="KW-0436">Ligase</keyword>
<keyword id="KW-0547">Nucleotide-binding</keyword>
<keyword id="KW-0648">Protein biosynthesis</keyword>
<dbReference type="EC" id="6.1.1.14" evidence="1"/>
<dbReference type="EMBL" id="CP000388">
    <property type="protein sequence ID" value="ABG38542.1"/>
    <property type="molecule type" value="Genomic_DNA"/>
</dbReference>
<dbReference type="RefSeq" id="WP_008305116.1">
    <property type="nucleotide sequence ID" value="NC_008228.1"/>
</dbReference>
<dbReference type="SMR" id="Q15ZY9"/>
<dbReference type="STRING" id="342610.Patl_0009"/>
<dbReference type="KEGG" id="pat:Patl_0009"/>
<dbReference type="eggNOG" id="COG0752">
    <property type="taxonomic scope" value="Bacteria"/>
</dbReference>
<dbReference type="HOGENOM" id="CLU_057066_1_0_6"/>
<dbReference type="OrthoDB" id="9802183at2"/>
<dbReference type="Proteomes" id="UP000001981">
    <property type="component" value="Chromosome"/>
</dbReference>
<dbReference type="GO" id="GO:0005829">
    <property type="term" value="C:cytosol"/>
    <property type="evidence" value="ECO:0007669"/>
    <property type="project" value="TreeGrafter"/>
</dbReference>
<dbReference type="GO" id="GO:0005524">
    <property type="term" value="F:ATP binding"/>
    <property type="evidence" value="ECO:0007669"/>
    <property type="project" value="UniProtKB-UniRule"/>
</dbReference>
<dbReference type="GO" id="GO:0004820">
    <property type="term" value="F:glycine-tRNA ligase activity"/>
    <property type="evidence" value="ECO:0007669"/>
    <property type="project" value="UniProtKB-UniRule"/>
</dbReference>
<dbReference type="GO" id="GO:0006426">
    <property type="term" value="P:glycyl-tRNA aminoacylation"/>
    <property type="evidence" value="ECO:0007669"/>
    <property type="project" value="UniProtKB-UniRule"/>
</dbReference>
<dbReference type="CDD" id="cd00733">
    <property type="entry name" value="GlyRS_alpha_core"/>
    <property type="match status" value="1"/>
</dbReference>
<dbReference type="FunFam" id="3.30.930.10:FF:000006">
    <property type="entry name" value="Glycine--tRNA ligase alpha subunit"/>
    <property type="match status" value="1"/>
</dbReference>
<dbReference type="Gene3D" id="3.30.930.10">
    <property type="entry name" value="Bira Bifunctional Protein, Domain 2"/>
    <property type="match status" value="1"/>
</dbReference>
<dbReference type="Gene3D" id="1.20.58.180">
    <property type="entry name" value="Class II aaRS and biotin synthetases, domain 2"/>
    <property type="match status" value="1"/>
</dbReference>
<dbReference type="HAMAP" id="MF_00254">
    <property type="entry name" value="Gly_tRNA_synth_alpha"/>
    <property type="match status" value="1"/>
</dbReference>
<dbReference type="InterPro" id="IPR045864">
    <property type="entry name" value="aa-tRNA-synth_II/BPL/LPL"/>
</dbReference>
<dbReference type="InterPro" id="IPR006194">
    <property type="entry name" value="Gly-tRNA-synth_heterodimer"/>
</dbReference>
<dbReference type="InterPro" id="IPR002310">
    <property type="entry name" value="Gly-tRNA_ligase_asu"/>
</dbReference>
<dbReference type="NCBIfam" id="TIGR00388">
    <property type="entry name" value="glyQ"/>
    <property type="match status" value="1"/>
</dbReference>
<dbReference type="NCBIfam" id="NF006827">
    <property type="entry name" value="PRK09348.1"/>
    <property type="match status" value="1"/>
</dbReference>
<dbReference type="PANTHER" id="PTHR30075:SF2">
    <property type="entry name" value="GLYCINE--TRNA LIGASE, CHLOROPLASTIC_MITOCHONDRIAL 2"/>
    <property type="match status" value="1"/>
</dbReference>
<dbReference type="PANTHER" id="PTHR30075">
    <property type="entry name" value="GLYCYL-TRNA SYNTHETASE"/>
    <property type="match status" value="1"/>
</dbReference>
<dbReference type="Pfam" id="PF02091">
    <property type="entry name" value="tRNA-synt_2e"/>
    <property type="match status" value="1"/>
</dbReference>
<dbReference type="PRINTS" id="PR01044">
    <property type="entry name" value="TRNASYNTHGA"/>
</dbReference>
<dbReference type="SUPFAM" id="SSF55681">
    <property type="entry name" value="Class II aaRS and biotin synthetases"/>
    <property type="match status" value="1"/>
</dbReference>
<dbReference type="PROSITE" id="PS50861">
    <property type="entry name" value="AA_TRNA_LIGASE_II_GLYAB"/>
    <property type="match status" value="1"/>
</dbReference>
<name>SYGA_PSEA6</name>
<comment type="catalytic activity">
    <reaction evidence="1">
        <text>tRNA(Gly) + glycine + ATP = glycyl-tRNA(Gly) + AMP + diphosphate</text>
        <dbReference type="Rhea" id="RHEA:16013"/>
        <dbReference type="Rhea" id="RHEA-COMP:9664"/>
        <dbReference type="Rhea" id="RHEA-COMP:9683"/>
        <dbReference type="ChEBI" id="CHEBI:30616"/>
        <dbReference type="ChEBI" id="CHEBI:33019"/>
        <dbReference type="ChEBI" id="CHEBI:57305"/>
        <dbReference type="ChEBI" id="CHEBI:78442"/>
        <dbReference type="ChEBI" id="CHEBI:78522"/>
        <dbReference type="ChEBI" id="CHEBI:456215"/>
        <dbReference type="EC" id="6.1.1.14"/>
    </reaction>
</comment>
<comment type="subunit">
    <text evidence="1">Tetramer of two alpha and two beta subunits.</text>
</comment>
<comment type="subcellular location">
    <subcellularLocation>
        <location evidence="1">Cytoplasm</location>
    </subcellularLocation>
</comment>
<comment type="similarity">
    <text evidence="1">Belongs to the class-II aminoacyl-tRNA synthetase family.</text>
</comment>
<gene>
    <name evidence="1" type="primary">glyQ</name>
    <name type="ordered locus">Patl_0009</name>
</gene>
<accession>Q15ZY9</accession>